<protein>
    <recommendedName>
        <fullName evidence="1">DNA ligase</fullName>
        <ecNumber evidence="1">6.5.1.2</ecNumber>
    </recommendedName>
    <alternativeName>
        <fullName evidence="1">Polydeoxyribonucleotide synthase [NAD(+)]</fullName>
    </alternativeName>
</protein>
<sequence length="664" mass="75219">MEVEKKIRGLREELQQHNYNYYVLDKPQISDYEFDIKLKELQELEEKYPEFEDDNSPTRRVGGAVTKNFETVVHENRMYSLSNSYSKEELEEWEARLKKIVEGKIQYVCELKYDGASISLTYENGILKRAVTRGDGFQGDDVTNNIKTIRSVPLKLKDEFPHKFDIRGEIVLPYEGFAKMNAERVEMGEEPYANPRNTASGSLKLQDSAEVARRPLECLLYSITGENTGVASQFEGLEKARKWGFKVPAESELKDSIEEVLHYINYWDEHRHDLPYETDGVVVKVNNFHQQEELGHTAKSPRWAIAYKFKAEQESTKLNKITYQVGRTGAITPVANLDAVQLAGTVVRRASLHNADQIEKLDVREGDTVFVEKGGEIIPKIVGVDFTKRDPDSNPTQYATNCPECDSELIRKDGEAQHYCPNVNGCPPQIIGRIQHYISRKAMDIEGLGGETVALLVNADLIESYADLYKLQKEEVLPLERMAEKSAENLINGIERSKEIPFERVLFALGIRYVGETVAKKLAKHFKSIEALMAASEEELVNIDEIGERIAWSVVEFFNIEANRENVERLKEYGIQLEISAEKLANQTNILEGNTFVISGVFEKVSRNDLKKMIEDNGGKLSSSISSKTNYLVAGDNMGPSKLAKAEKLGTSIISEEDFLKMLE</sequence>
<proteinExistence type="inferred from homology"/>
<dbReference type="EC" id="6.5.1.2" evidence="1"/>
<dbReference type="EMBL" id="CU207366">
    <property type="protein sequence ID" value="CAL65618.1"/>
    <property type="molecule type" value="Genomic_DNA"/>
</dbReference>
<dbReference type="RefSeq" id="WP_011708555.1">
    <property type="nucleotide sequence ID" value="NC_008571.1"/>
</dbReference>
<dbReference type="SMR" id="A0LZ23"/>
<dbReference type="STRING" id="411154.GFO_0640"/>
<dbReference type="KEGG" id="gfo:GFO_0640"/>
<dbReference type="eggNOG" id="COG0272">
    <property type="taxonomic scope" value="Bacteria"/>
</dbReference>
<dbReference type="HOGENOM" id="CLU_007764_2_0_10"/>
<dbReference type="OrthoDB" id="9759736at2"/>
<dbReference type="Proteomes" id="UP000000755">
    <property type="component" value="Chromosome"/>
</dbReference>
<dbReference type="GO" id="GO:0005829">
    <property type="term" value="C:cytosol"/>
    <property type="evidence" value="ECO:0007669"/>
    <property type="project" value="TreeGrafter"/>
</dbReference>
<dbReference type="GO" id="GO:0003677">
    <property type="term" value="F:DNA binding"/>
    <property type="evidence" value="ECO:0007669"/>
    <property type="project" value="InterPro"/>
</dbReference>
<dbReference type="GO" id="GO:0003911">
    <property type="term" value="F:DNA ligase (NAD+) activity"/>
    <property type="evidence" value="ECO:0007669"/>
    <property type="project" value="UniProtKB-UniRule"/>
</dbReference>
<dbReference type="GO" id="GO:0046872">
    <property type="term" value="F:metal ion binding"/>
    <property type="evidence" value="ECO:0007669"/>
    <property type="project" value="UniProtKB-KW"/>
</dbReference>
<dbReference type="GO" id="GO:0006281">
    <property type="term" value="P:DNA repair"/>
    <property type="evidence" value="ECO:0007669"/>
    <property type="project" value="UniProtKB-KW"/>
</dbReference>
<dbReference type="GO" id="GO:0006260">
    <property type="term" value="P:DNA replication"/>
    <property type="evidence" value="ECO:0007669"/>
    <property type="project" value="UniProtKB-KW"/>
</dbReference>
<dbReference type="CDD" id="cd17748">
    <property type="entry name" value="BRCT_DNA_ligase_like"/>
    <property type="match status" value="1"/>
</dbReference>
<dbReference type="CDD" id="cd00114">
    <property type="entry name" value="LIGANc"/>
    <property type="match status" value="1"/>
</dbReference>
<dbReference type="FunFam" id="1.10.150.20:FF:000006">
    <property type="entry name" value="DNA ligase"/>
    <property type="match status" value="1"/>
</dbReference>
<dbReference type="FunFam" id="1.10.150.20:FF:000007">
    <property type="entry name" value="DNA ligase"/>
    <property type="match status" value="1"/>
</dbReference>
<dbReference type="FunFam" id="1.10.287.610:FF:000002">
    <property type="entry name" value="DNA ligase"/>
    <property type="match status" value="1"/>
</dbReference>
<dbReference type="FunFam" id="2.40.50.140:FF:000012">
    <property type="entry name" value="DNA ligase"/>
    <property type="match status" value="1"/>
</dbReference>
<dbReference type="FunFam" id="3.30.470.30:FF:000001">
    <property type="entry name" value="DNA ligase"/>
    <property type="match status" value="1"/>
</dbReference>
<dbReference type="Gene3D" id="6.20.10.30">
    <property type="match status" value="1"/>
</dbReference>
<dbReference type="Gene3D" id="1.10.150.20">
    <property type="entry name" value="5' to 3' exonuclease, C-terminal subdomain"/>
    <property type="match status" value="2"/>
</dbReference>
<dbReference type="Gene3D" id="3.40.50.10190">
    <property type="entry name" value="BRCT domain"/>
    <property type="match status" value="1"/>
</dbReference>
<dbReference type="Gene3D" id="3.30.470.30">
    <property type="entry name" value="DNA ligase/mRNA capping enzyme"/>
    <property type="match status" value="1"/>
</dbReference>
<dbReference type="Gene3D" id="1.10.287.610">
    <property type="entry name" value="Helix hairpin bin"/>
    <property type="match status" value="1"/>
</dbReference>
<dbReference type="Gene3D" id="2.40.50.140">
    <property type="entry name" value="Nucleic acid-binding proteins"/>
    <property type="match status" value="1"/>
</dbReference>
<dbReference type="HAMAP" id="MF_01588">
    <property type="entry name" value="DNA_ligase_A"/>
    <property type="match status" value="1"/>
</dbReference>
<dbReference type="InterPro" id="IPR001357">
    <property type="entry name" value="BRCT_dom"/>
</dbReference>
<dbReference type="InterPro" id="IPR036420">
    <property type="entry name" value="BRCT_dom_sf"/>
</dbReference>
<dbReference type="InterPro" id="IPR041663">
    <property type="entry name" value="DisA/LigA_HHH"/>
</dbReference>
<dbReference type="InterPro" id="IPR001679">
    <property type="entry name" value="DNA_ligase"/>
</dbReference>
<dbReference type="InterPro" id="IPR013839">
    <property type="entry name" value="DNAligase_adenylation"/>
</dbReference>
<dbReference type="InterPro" id="IPR013840">
    <property type="entry name" value="DNAligase_N"/>
</dbReference>
<dbReference type="InterPro" id="IPR003583">
    <property type="entry name" value="Hlx-hairpin-Hlx_DNA-bd_motif"/>
</dbReference>
<dbReference type="InterPro" id="IPR012340">
    <property type="entry name" value="NA-bd_OB-fold"/>
</dbReference>
<dbReference type="InterPro" id="IPR004150">
    <property type="entry name" value="NAD_DNA_ligase_OB"/>
</dbReference>
<dbReference type="InterPro" id="IPR010994">
    <property type="entry name" value="RuvA_2-like"/>
</dbReference>
<dbReference type="InterPro" id="IPR004149">
    <property type="entry name" value="Znf_DNAligase_C4"/>
</dbReference>
<dbReference type="NCBIfam" id="TIGR00575">
    <property type="entry name" value="dnlj"/>
    <property type="match status" value="1"/>
</dbReference>
<dbReference type="NCBIfam" id="NF005932">
    <property type="entry name" value="PRK07956.1"/>
    <property type="match status" value="1"/>
</dbReference>
<dbReference type="PANTHER" id="PTHR23389">
    <property type="entry name" value="CHROMOSOME TRANSMISSION FIDELITY FACTOR 18"/>
    <property type="match status" value="1"/>
</dbReference>
<dbReference type="PANTHER" id="PTHR23389:SF9">
    <property type="entry name" value="DNA LIGASE"/>
    <property type="match status" value="1"/>
</dbReference>
<dbReference type="Pfam" id="PF00533">
    <property type="entry name" value="BRCT"/>
    <property type="match status" value="1"/>
</dbReference>
<dbReference type="Pfam" id="PF01653">
    <property type="entry name" value="DNA_ligase_aden"/>
    <property type="match status" value="1"/>
</dbReference>
<dbReference type="Pfam" id="PF03120">
    <property type="entry name" value="DNA_ligase_OB"/>
    <property type="match status" value="1"/>
</dbReference>
<dbReference type="Pfam" id="PF03119">
    <property type="entry name" value="DNA_ligase_ZBD"/>
    <property type="match status" value="1"/>
</dbReference>
<dbReference type="Pfam" id="PF12826">
    <property type="entry name" value="HHH_2"/>
    <property type="match status" value="1"/>
</dbReference>
<dbReference type="Pfam" id="PF22745">
    <property type="entry name" value="Nlig-Ia"/>
    <property type="match status" value="1"/>
</dbReference>
<dbReference type="PIRSF" id="PIRSF001604">
    <property type="entry name" value="LigA"/>
    <property type="match status" value="1"/>
</dbReference>
<dbReference type="SMART" id="SM00292">
    <property type="entry name" value="BRCT"/>
    <property type="match status" value="1"/>
</dbReference>
<dbReference type="SMART" id="SM00278">
    <property type="entry name" value="HhH1"/>
    <property type="match status" value="4"/>
</dbReference>
<dbReference type="SMART" id="SM00532">
    <property type="entry name" value="LIGANc"/>
    <property type="match status" value="1"/>
</dbReference>
<dbReference type="SUPFAM" id="SSF52113">
    <property type="entry name" value="BRCT domain"/>
    <property type="match status" value="1"/>
</dbReference>
<dbReference type="SUPFAM" id="SSF56091">
    <property type="entry name" value="DNA ligase/mRNA capping enzyme, catalytic domain"/>
    <property type="match status" value="1"/>
</dbReference>
<dbReference type="SUPFAM" id="SSF50249">
    <property type="entry name" value="Nucleic acid-binding proteins"/>
    <property type="match status" value="1"/>
</dbReference>
<dbReference type="SUPFAM" id="SSF47781">
    <property type="entry name" value="RuvA domain 2-like"/>
    <property type="match status" value="1"/>
</dbReference>
<dbReference type="PROSITE" id="PS50172">
    <property type="entry name" value="BRCT"/>
    <property type="match status" value="1"/>
</dbReference>
<gene>
    <name evidence="1" type="primary">ligA</name>
    <name type="ordered locus">GFO_0640</name>
</gene>
<comment type="function">
    <text evidence="1">DNA ligase that catalyzes the formation of phosphodiester linkages between 5'-phosphoryl and 3'-hydroxyl groups in double-stranded DNA using NAD as a coenzyme and as the energy source for the reaction. It is essential for DNA replication and repair of damaged DNA.</text>
</comment>
<comment type="catalytic activity">
    <reaction evidence="1">
        <text>NAD(+) + (deoxyribonucleotide)n-3'-hydroxyl + 5'-phospho-(deoxyribonucleotide)m = (deoxyribonucleotide)n+m + AMP + beta-nicotinamide D-nucleotide.</text>
        <dbReference type="EC" id="6.5.1.2"/>
    </reaction>
</comment>
<comment type="cofactor">
    <cofactor evidence="1">
        <name>Mg(2+)</name>
        <dbReference type="ChEBI" id="CHEBI:18420"/>
    </cofactor>
    <cofactor evidence="1">
        <name>Mn(2+)</name>
        <dbReference type="ChEBI" id="CHEBI:29035"/>
    </cofactor>
</comment>
<comment type="similarity">
    <text evidence="1">Belongs to the NAD-dependent DNA ligase family. LigA subfamily.</text>
</comment>
<reference key="1">
    <citation type="journal article" date="2006" name="Environ. Microbiol.">
        <title>Whole genome analysis of the marine Bacteroidetes'Gramella forsetii' reveals adaptations to degradation of polymeric organic matter.</title>
        <authorList>
            <person name="Bauer M."/>
            <person name="Kube M."/>
            <person name="Teeling H."/>
            <person name="Richter M."/>
            <person name="Lombardot T."/>
            <person name="Allers E."/>
            <person name="Wuerdemann C.A."/>
            <person name="Quast C."/>
            <person name="Kuhl H."/>
            <person name="Knaust F."/>
            <person name="Woebken D."/>
            <person name="Bischof K."/>
            <person name="Mussmann M."/>
            <person name="Choudhuri J.V."/>
            <person name="Meyer F."/>
            <person name="Reinhardt R."/>
            <person name="Amann R.I."/>
            <person name="Gloeckner F.O."/>
        </authorList>
    </citation>
    <scope>NUCLEOTIDE SEQUENCE [LARGE SCALE GENOMIC DNA]</scope>
    <source>
        <strain>DSM 17595 / CGMCC 1.15422 / KT0803</strain>
    </source>
</reference>
<accession>A0LZ23</accession>
<keyword id="KW-0227">DNA damage</keyword>
<keyword id="KW-0234">DNA repair</keyword>
<keyword id="KW-0235">DNA replication</keyword>
<keyword id="KW-0436">Ligase</keyword>
<keyword id="KW-0460">Magnesium</keyword>
<keyword id="KW-0464">Manganese</keyword>
<keyword id="KW-0479">Metal-binding</keyword>
<keyword id="KW-0520">NAD</keyword>
<keyword id="KW-0677">Repeat</keyword>
<keyword id="KW-0862">Zinc</keyword>
<name>DNLJ_CHRFK</name>
<feature type="chain" id="PRO_0000313253" description="DNA ligase">
    <location>
        <begin position="1"/>
        <end position="664"/>
    </location>
</feature>
<feature type="domain" description="BRCT 1" evidence="1">
    <location>
        <begin position="237"/>
        <end position="257"/>
    </location>
</feature>
<feature type="domain" description="BRCT 2" evidence="1">
    <location>
        <begin position="586"/>
        <end position="664"/>
    </location>
</feature>
<feature type="active site" description="N6-AMP-lysine intermediate" evidence="1">
    <location>
        <position position="112"/>
    </location>
</feature>
<feature type="binding site" evidence="1">
    <location>
        <begin position="31"/>
        <end position="35"/>
    </location>
    <ligand>
        <name>NAD(+)</name>
        <dbReference type="ChEBI" id="CHEBI:57540"/>
    </ligand>
</feature>
<feature type="binding site" evidence="1">
    <location>
        <begin position="80"/>
        <end position="81"/>
    </location>
    <ligand>
        <name>NAD(+)</name>
        <dbReference type="ChEBI" id="CHEBI:57540"/>
    </ligand>
</feature>
<feature type="binding site" evidence="1">
    <location>
        <position position="110"/>
    </location>
    <ligand>
        <name>NAD(+)</name>
        <dbReference type="ChEBI" id="CHEBI:57540"/>
    </ligand>
</feature>
<feature type="binding site" evidence="1">
    <location>
        <position position="133"/>
    </location>
    <ligand>
        <name>NAD(+)</name>
        <dbReference type="ChEBI" id="CHEBI:57540"/>
    </ligand>
</feature>
<feature type="binding site" evidence="1">
    <location>
        <position position="169"/>
    </location>
    <ligand>
        <name>NAD(+)</name>
        <dbReference type="ChEBI" id="CHEBI:57540"/>
    </ligand>
</feature>
<feature type="binding site" evidence="1">
    <location>
        <position position="284"/>
    </location>
    <ligand>
        <name>NAD(+)</name>
        <dbReference type="ChEBI" id="CHEBI:57540"/>
    </ligand>
</feature>
<feature type="binding site" evidence="1">
    <location>
        <position position="308"/>
    </location>
    <ligand>
        <name>NAD(+)</name>
        <dbReference type="ChEBI" id="CHEBI:57540"/>
    </ligand>
</feature>
<feature type="binding site" evidence="1">
    <location>
        <position position="402"/>
    </location>
    <ligand>
        <name>Zn(2+)</name>
        <dbReference type="ChEBI" id="CHEBI:29105"/>
    </ligand>
</feature>
<feature type="binding site" evidence="1">
    <location>
        <position position="405"/>
    </location>
    <ligand>
        <name>Zn(2+)</name>
        <dbReference type="ChEBI" id="CHEBI:29105"/>
    </ligand>
</feature>
<feature type="binding site" evidence="1">
    <location>
        <position position="420"/>
    </location>
    <ligand>
        <name>Zn(2+)</name>
        <dbReference type="ChEBI" id="CHEBI:29105"/>
    </ligand>
</feature>
<feature type="binding site" evidence="1">
    <location>
        <position position="426"/>
    </location>
    <ligand>
        <name>Zn(2+)</name>
        <dbReference type="ChEBI" id="CHEBI:29105"/>
    </ligand>
</feature>
<evidence type="ECO:0000255" key="1">
    <source>
        <dbReference type="HAMAP-Rule" id="MF_01588"/>
    </source>
</evidence>
<organism>
    <name type="scientific">Christiangramia forsetii (strain DSM 17595 / CGMCC 1.15422 / KT0803)</name>
    <name type="common">Gramella forsetii</name>
    <dbReference type="NCBI Taxonomy" id="411154"/>
    <lineage>
        <taxon>Bacteria</taxon>
        <taxon>Pseudomonadati</taxon>
        <taxon>Bacteroidota</taxon>
        <taxon>Flavobacteriia</taxon>
        <taxon>Flavobacteriales</taxon>
        <taxon>Flavobacteriaceae</taxon>
        <taxon>Christiangramia</taxon>
    </lineage>
</organism>